<gene>
    <name evidence="1" type="primary">greA</name>
    <name type="ordered locus">Cphamn1_0906</name>
</gene>
<feature type="chain" id="PRO_1000094156" description="Transcription elongation factor GreA">
    <location>
        <begin position="1"/>
        <end position="160"/>
    </location>
</feature>
<feature type="coiled-coil region" evidence="1">
    <location>
        <begin position="43"/>
        <end position="76"/>
    </location>
</feature>
<evidence type="ECO:0000255" key="1">
    <source>
        <dbReference type="HAMAP-Rule" id="MF_00105"/>
    </source>
</evidence>
<keyword id="KW-0175">Coiled coil</keyword>
<keyword id="KW-0238">DNA-binding</keyword>
<keyword id="KW-0804">Transcription</keyword>
<keyword id="KW-0805">Transcription regulation</keyword>
<protein>
    <recommendedName>
        <fullName evidence="1">Transcription elongation factor GreA</fullName>
    </recommendedName>
    <alternativeName>
        <fullName evidence="1">Transcript cleavage factor GreA</fullName>
    </alternativeName>
</protein>
<organism>
    <name type="scientific">Chlorobium phaeobacteroides (strain BS1)</name>
    <dbReference type="NCBI Taxonomy" id="331678"/>
    <lineage>
        <taxon>Bacteria</taxon>
        <taxon>Pseudomonadati</taxon>
        <taxon>Chlorobiota</taxon>
        <taxon>Chlorobiia</taxon>
        <taxon>Chlorobiales</taxon>
        <taxon>Chlorobiaceae</taxon>
        <taxon>Chlorobium/Pelodictyon group</taxon>
        <taxon>Chlorobium</taxon>
    </lineage>
</organism>
<reference key="1">
    <citation type="submission" date="2008-06" db="EMBL/GenBank/DDBJ databases">
        <title>Complete sequence of Chlorobium phaeobacteroides BS1.</title>
        <authorList>
            <consortium name="US DOE Joint Genome Institute"/>
            <person name="Lucas S."/>
            <person name="Copeland A."/>
            <person name="Lapidus A."/>
            <person name="Glavina del Rio T."/>
            <person name="Dalin E."/>
            <person name="Tice H."/>
            <person name="Bruce D."/>
            <person name="Goodwin L."/>
            <person name="Pitluck S."/>
            <person name="Schmutz J."/>
            <person name="Larimer F."/>
            <person name="Land M."/>
            <person name="Hauser L."/>
            <person name="Kyrpides N."/>
            <person name="Ovchinnikova G."/>
            <person name="Li T."/>
            <person name="Liu Z."/>
            <person name="Zhao F."/>
            <person name="Overmann J."/>
            <person name="Bryant D.A."/>
            <person name="Richardson P."/>
        </authorList>
    </citation>
    <scope>NUCLEOTIDE SEQUENCE [LARGE SCALE GENOMIC DNA]</scope>
    <source>
        <strain>BS1</strain>
    </source>
</reference>
<sequence length="160" mass="18129">MSDRVYLTKDGYNRLRDELTVLKSDVRKEVLEKIAEARAHGDLSENAEYDAAREQQRQLENKIGDLESKLTRATILDPKQVKTDRVYILTSVKLKNLDAQKEEIIEYTLVSSDEADTDLGKISVRSPVGKSLLGKAVGDKVQIQVPKGELHYEILEIFVK</sequence>
<accession>B3EPH3</accession>
<name>GREA_CHLPB</name>
<dbReference type="EMBL" id="CP001101">
    <property type="protein sequence ID" value="ACE03851.1"/>
    <property type="molecule type" value="Genomic_DNA"/>
</dbReference>
<dbReference type="SMR" id="B3EPH3"/>
<dbReference type="STRING" id="331678.Cphamn1_0906"/>
<dbReference type="KEGG" id="cpb:Cphamn1_0906"/>
<dbReference type="eggNOG" id="COG0782">
    <property type="taxonomic scope" value="Bacteria"/>
</dbReference>
<dbReference type="HOGENOM" id="CLU_101379_2_0_10"/>
<dbReference type="OrthoDB" id="9808774at2"/>
<dbReference type="GO" id="GO:0003677">
    <property type="term" value="F:DNA binding"/>
    <property type="evidence" value="ECO:0007669"/>
    <property type="project" value="UniProtKB-UniRule"/>
</dbReference>
<dbReference type="GO" id="GO:0070063">
    <property type="term" value="F:RNA polymerase binding"/>
    <property type="evidence" value="ECO:0007669"/>
    <property type="project" value="InterPro"/>
</dbReference>
<dbReference type="GO" id="GO:0006354">
    <property type="term" value="P:DNA-templated transcription elongation"/>
    <property type="evidence" value="ECO:0007669"/>
    <property type="project" value="TreeGrafter"/>
</dbReference>
<dbReference type="GO" id="GO:0032784">
    <property type="term" value="P:regulation of DNA-templated transcription elongation"/>
    <property type="evidence" value="ECO:0007669"/>
    <property type="project" value="UniProtKB-UniRule"/>
</dbReference>
<dbReference type="FunFam" id="1.10.287.180:FF:000001">
    <property type="entry name" value="Transcription elongation factor GreA"/>
    <property type="match status" value="1"/>
</dbReference>
<dbReference type="FunFam" id="3.10.50.30:FF:000001">
    <property type="entry name" value="Transcription elongation factor GreA"/>
    <property type="match status" value="1"/>
</dbReference>
<dbReference type="Gene3D" id="3.10.50.30">
    <property type="entry name" value="Transcription elongation factor, GreA/GreB, C-terminal domain"/>
    <property type="match status" value="1"/>
</dbReference>
<dbReference type="Gene3D" id="1.10.287.180">
    <property type="entry name" value="Transcription elongation factor, GreA/GreB, N-terminal domain"/>
    <property type="match status" value="1"/>
</dbReference>
<dbReference type="HAMAP" id="MF_00105">
    <property type="entry name" value="GreA_GreB"/>
    <property type="match status" value="1"/>
</dbReference>
<dbReference type="InterPro" id="IPR036953">
    <property type="entry name" value="GreA/GreB_C_sf"/>
</dbReference>
<dbReference type="InterPro" id="IPR018151">
    <property type="entry name" value="TF_GreA/GreB_CS"/>
</dbReference>
<dbReference type="InterPro" id="IPR006359">
    <property type="entry name" value="Tscrpt_elong_fac_GreA"/>
</dbReference>
<dbReference type="InterPro" id="IPR028624">
    <property type="entry name" value="Tscrpt_elong_fac_GreA/B"/>
</dbReference>
<dbReference type="InterPro" id="IPR001437">
    <property type="entry name" value="Tscrpt_elong_fac_GreA/B_C"/>
</dbReference>
<dbReference type="InterPro" id="IPR023459">
    <property type="entry name" value="Tscrpt_elong_fac_GreA/B_fam"/>
</dbReference>
<dbReference type="InterPro" id="IPR022691">
    <property type="entry name" value="Tscrpt_elong_fac_GreA/B_N"/>
</dbReference>
<dbReference type="InterPro" id="IPR036805">
    <property type="entry name" value="Tscrpt_elong_fac_GreA/B_N_sf"/>
</dbReference>
<dbReference type="NCBIfam" id="TIGR01462">
    <property type="entry name" value="greA"/>
    <property type="match status" value="1"/>
</dbReference>
<dbReference type="NCBIfam" id="NF001261">
    <property type="entry name" value="PRK00226.1-2"/>
    <property type="match status" value="1"/>
</dbReference>
<dbReference type="NCBIfam" id="NF001263">
    <property type="entry name" value="PRK00226.1-4"/>
    <property type="match status" value="1"/>
</dbReference>
<dbReference type="PANTHER" id="PTHR30437">
    <property type="entry name" value="TRANSCRIPTION ELONGATION FACTOR GREA"/>
    <property type="match status" value="1"/>
</dbReference>
<dbReference type="PANTHER" id="PTHR30437:SF4">
    <property type="entry name" value="TRANSCRIPTION ELONGATION FACTOR GREA"/>
    <property type="match status" value="1"/>
</dbReference>
<dbReference type="Pfam" id="PF01272">
    <property type="entry name" value="GreA_GreB"/>
    <property type="match status" value="1"/>
</dbReference>
<dbReference type="Pfam" id="PF03449">
    <property type="entry name" value="GreA_GreB_N"/>
    <property type="match status" value="1"/>
</dbReference>
<dbReference type="PIRSF" id="PIRSF006092">
    <property type="entry name" value="GreA_GreB"/>
    <property type="match status" value="1"/>
</dbReference>
<dbReference type="SUPFAM" id="SSF54534">
    <property type="entry name" value="FKBP-like"/>
    <property type="match status" value="1"/>
</dbReference>
<dbReference type="SUPFAM" id="SSF46557">
    <property type="entry name" value="GreA transcript cleavage protein, N-terminal domain"/>
    <property type="match status" value="1"/>
</dbReference>
<dbReference type="PROSITE" id="PS00829">
    <property type="entry name" value="GREAB_1"/>
    <property type="match status" value="1"/>
</dbReference>
<dbReference type="PROSITE" id="PS00830">
    <property type="entry name" value="GREAB_2"/>
    <property type="match status" value="1"/>
</dbReference>
<comment type="function">
    <text evidence="1">Necessary for efficient RNA polymerase transcription elongation past template-encoded arresting sites. The arresting sites in DNA have the property of trapping a certain fraction of elongating RNA polymerases that pass through, resulting in locked ternary complexes. Cleavage of the nascent transcript by cleavage factors such as GreA or GreB allows the resumption of elongation from the new 3'terminus. GreA releases sequences of 2 to 3 nucleotides.</text>
</comment>
<comment type="similarity">
    <text evidence="1">Belongs to the GreA/GreB family.</text>
</comment>
<proteinExistence type="inferred from homology"/>